<comment type="function">
    <text evidence="1">Binds directly to 16S ribosomal RNA.</text>
</comment>
<comment type="similarity">
    <text evidence="1">Belongs to the bacterial ribosomal protein bS20 family.</text>
</comment>
<keyword id="KW-1185">Reference proteome</keyword>
<keyword id="KW-0687">Ribonucleoprotein</keyword>
<keyword id="KW-0689">Ribosomal protein</keyword>
<keyword id="KW-0694">RNA-binding</keyword>
<keyword id="KW-0699">rRNA-binding</keyword>
<accession>Q0C4P9</accession>
<proteinExistence type="inferred from homology"/>
<protein>
    <recommendedName>
        <fullName evidence="1">Small ribosomal subunit protein bS20</fullName>
    </recommendedName>
    <alternativeName>
        <fullName evidence="3">30S ribosomal protein S20</fullName>
    </alternativeName>
</protein>
<reference key="1">
    <citation type="journal article" date="2006" name="J. Bacteriol.">
        <title>Comparative genomic evidence for a close relationship between the dimorphic prosthecate bacteria Hyphomonas neptunium and Caulobacter crescentus.</title>
        <authorList>
            <person name="Badger J.H."/>
            <person name="Hoover T.R."/>
            <person name="Brun Y.V."/>
            <person name="Weiner R.M."/>
            <person name="Laub M.T."/>
            <person name="Alexandre G."/>
            <person name="Mrazek J."/>
            <person name="Ren Q."/>
            <person name="Paulsen I.T."/>
            <person name="Nelson K.E."/>
            <person name="Khouri H.M."/>
            <person name="Radune D."/>
            <person name="Sosa J."/>
            <person name="Dodson R.J."/>
            <person name="Sullivan S.A."/>
            <person name="Rosovitz M.J."/>
            <person name="Madupu R."/>
            <person name="Brinkac L.M."/>
            <person name="Durkin A.S."/>
            <person name="Daugherty S.C."/>
            <person name="Kothari S.P."/>
            <person name="Giglio M.G."/>
            <person name="Zhou L."/>
            <person name="Haft D.H."/>
            <person name="Selengut J.D."/>
            <person name="Davidsen T.M."/>
            <person name="Yang Q."/>
            <person name="Zafar N."/>
            <person name="Ward N.L."/>
        </authorList>
    </citation>
    <scope>NUCLEOTIDE SEQUENCE [LARGE SCALE GENOMIC DNA]</scope>
    <source>
        <strain>ATCC 15444</strain>
    </source>
</reference>
<name>RS20_HYPNA</name>
<gene>
    <name evidence="1" type="primary">rpsT</name>
    <name type="ordered locus">HNE_0565</name>
</gene>
<sequence length="87" mass="9592">MANTRSAKKMVRKIAARTDVNKARRSRVRTYVRKVEEAIASGDKPAAQEALKAAQPEIMRSVTKGVTHKNTASRKVSRLSARVKAMA</sequence>
<feature type="chain" id="PRO_1000014594" description="Small ribosomal subunit protein bS20">
    <location>
        <begin position="1"/>
        <end position="87"/>
    </location>
</feature>
<feature type="region of interest" description="Disordered" evidence="2">
    <location>
        <begin position="1"/>
        <end position="22"/>
    </location>
</feature>
<feature type="region of interest" description="Disordered" evidence="2">
    <location>
        <begin position="64"/>
        <end position="87"/>
    </location>
</feature>
<feature type="compositionally biased region" description="Basic residues" evidence="2">
    <location>
        <begin position="1"/>
        <end position="15"/>
    </location>
</feature>
<evidence type="ECO:0000255" key="1">
    <source>
        <dbReference type="HAMAP-Rule" id="MF_00500"/>
    </source>
</evidence>
<evidence type="ECO:0000256" key="2">
    <source>
        <dbReference type="SAM" id="MobiDB-lite"/>
    </source>
</evidence>
<evidence type="ECO:0000305" key="3"/>
<dbReference type="EMBL" id="CP000158">
    <property type="protein sequence ID" value="ABI78806.1"/>
    <property type="molecule type" value="Genomic_DNA"/>
</dbReference>
<dbReference type="RefSeq" id="WP_011645594.1">
    <property type="nucleotide sequence ID" value="NC_008358.1"/>
</dbReference>
<dbReference type="SMR" id="Q0C4P9"/>
<dbReference type="STRING" id="228405.HNE_0565"/>
<dbReference type="KEGG" id="hne:HNE_0565"/>
<dbReference type="eggNOG" id="COG0268">
    <property type="taxonomic scope" value="Bacteria"/>
</dbReference>
<dbReference type="HOGENOM" id="CLU_160655_3_0_5"/>
<dbReference type="Proteomes" id="UP000001959">
    <property type="component" value="Chromosome"/>
</dbReference>
<dbReference type="GO" id="GO:0005829">
    <property type="term" value="C:cytosol"/>
    <property type="evidence" value="ECO:0007669"/>
    <property type="project" value="TreeGrafter"/>
</dbReference>
<dbReference type="GO" id="GO:0015935">
    <property type="term" value="C:small ribosomal subunit"/>
    <property type="evidence" value="ECO:0007669"/>
    <property type="project" value="TreeGrafter"/>
</dbReference>
<dbReference type="GO" id="GO:0070181">
    <property type="term" value="F:small ribosomal subunit rRNA binding"/>
    <property type="evidence" value="ECO:0007669"/>
    <property type="project" value="TreeGrafter"/>
</dbReference>
<dbReference type="GO" id="GO:0003735">
    <property type="term" value="F:structural constituent of ribosome"/>
    <property type="evidence" value="ECO:0007669"/>
    <property type="project" value="InterPro"/>
</dbReference>
<dbReference type="GO" id="GO:0006412">
    <property type="term" value="P:translation"/>
    <property type="evidence" value="ECO:0007669"/>
    <property type="project" value="UniProtKB-UniRule"/>
</dbReference>
<dbReference type="FunFam" id="1.20.58.110:FF:000001">
    <property type="entry name" value="30S ribosomal protein S20"/>
    <property type="match status" value="1"/>
</dbReference>
<dbReference type="Gene3D" id="1.20.58.110">
    <property type="entry name" value="Ribosomal protein S20"/>
    <property type="match status" value="1"/>
</dbReference>
<dbReference type="HAMAP" id="MF_00500">
    <property type="entry name" value="Ribosomal_bS20"/>
    <property type="match status" value="1"/>
</dbReference>
<dbReference type="InterPro" id="IPR002583">
    <property type="entry name" value="Ribosomal_bS20"/>
</dbReference>
<dbReference type="InterPro" id="IPR036510">
    <property type="entry name" value="Ribosomal_bS20_sf"/>
</dbReference>
<dbReference type="NCBIfam" id="TIGR00029">
    <property type="entry name" value="S20"/>
    <property type="match status" value="1"/>
</dbReference>
<dbReference type="PANTHER" id="PTHR33398">
    <property type="entry name" value="30S RIBOSOMAL PROTEIN S20"/>
    <property type="match status" value="1"/>
</dbReference>
<dbReference type="PANTHER" id="PTHR33398:SF1">
    <property type="entry name" value="SMALL RIBOSOMAL SUBUNIT PROTEIN BS20C"/>
    <property type="match status" value="1"/>
</dbReference>
<dbReference type="Pfam" id="PF01649">
    <property type="entry name" value="Ribosomal_S20p"/>
    <property type="match status" value="1"/>
</dbReference>
<dbReference type="SUPFAM" id="SSF46992">
    <property type="entry name" value="Ribosomal protein S20"/>
    <property type="match status" value="1"/>
</dbReference>
<organism>
    <name type="scientific">Hyphomonas neptunium (strain ATCC 15444)</name>
    <dbReference type="NCBI Taxonomy" id="228405"/>
    <lineage>
        <taxon>Bacteria</taxon>
        <taxon>Pseudomonadati</taxon>
        <taxon>Pseudomonadota</taxon>
        <taxon>Alphaproteobacteria</taxon>
        <taxon>Hyphomonadales</taxon>
        <taxon>Hyphomonadaceae</taxon>
        <taxon>Hyphomonas</taxon>
    </lineage>
</organism>